<accession>A4G4Q7</accession>
<sequence length="375" mass="40413">MSKTLALTEELIALSSVTPEDKGCQSRLIELLSPLGFVCETIESDGVTNLWARKGTAQPLLVFAGHTDVVPTGPLDQWTSPPFVPTQRDGKLYGRGAADMKTSIAAMVVAAEEFVHAHPDHKGSIGFLITSDEEGPATDGTVIVCNALKARGEQLDYCVVGEPTSSDVLGDTIKNGRRGSMSGKLTVKGIQGHIAYPQLARNPIHQCAPALAELVAEKWDDGNEYYLPTSWQVSNMHGGAGASNVIPGNVVIDFNFRFCTASTVEGLQQRVHAILDKHGLEYDLKWSISGYPFLTPKGSLSDAMADAIKSETGVTTELSTTGGTSDGRFIAQICPQVVEFGPPNGSIHKIDEHIEVRFIDPLKNIYRHTMENLLL</sequence>
<organism>
    <name type="scientific">Herminiimonas arsenicoxydans</name>
    <dbReference type="NCBI Taxonomy" id="204773"/>
    <lineage>
        <taxon>Bacteria</taxon>
        <taxon>Pseudomonadati</taxon>
        <taxon>Pseudomonadota</taxon>
        <taxon>Betaproteobacteria</taxon>
        <taxon>Burkholderiales</taxon>
        <taxon>Oxalobacteraceae</taxon>
        <taxon>Herminiimonas</taxon>
    </lineage>
</organism>
<comment type="function">
    <text evidence="1">Catalyzes the hydrolysis of N-succinyl-L,L-diaminopimelic acid (SDAP), forming succinate and LL-2,6-diaminopimelate (DAP), an intermediate involved in the bacterial biosynthesis of lysine and meso-diaminopimelic acid, an essential component of bacterial cell walls.</text>
</comment>
<comment type="catalytic activity">
    <reaction evidence="1">
        <text>N-succinyl-(2S,6S)-2,6-diaminopimelate + H2O = (2S,6S)-2,6-diaminopimelate + succinate</text>
        <dbReference type="Rhea" id="RHEA:22608"/>
        <dbReference type="ChEBI" id="CHEBI:15377"/>
        <dbReference type="ChEBI" id="CHEBI:30031"/>
        <dbReference type="ChEBI" id="CHEBI:57609"/>
        <dbReference type="ChEBI" id="CHEBI:58087"/>
        <dbReference type="EC" id="3.5.1.18"/>
    </reaction>
</comment>
<comment type="cofactor">
    <cofactor evidence="1">
        <name>Zn(2+)</name>
        <dbReference type="ChEBI" id="CHEBI:29105"/>
    </cofactor>
    <cofactor evidence="1">
        <name>Co(2+)</name>
        <dbReference type="ChEBI" id="CHEBI:48828"/>
    </cofactor>
    <text evidence="1">Binds 2 Zn(2+) or Co(2+) ions per subunit.</text>
</comment>
<comment type="pathway">
    <text evidence="1">Amino-acid biosynthesis; L-lysine biosynthesis via DAP pathway; LL-2,6-diaminopimelate from (S)-tetrahydrodipicolinate (succinylase route): step 3/3.</text>
</comment>
<comment type="subunit">
    <text evidence="1">Homodimer.</text>
</comment>
<comment type="similarity">
    <text evidence="1">Belongs to the peptidase M20A family. DapE subfamily.</text>
</comment>
<reference key="1">
    <citation type="journal article" date="2007" name="PLoS Genet.">
        <title>A tale of two oxidation states: bacterial colonization of arsenic-rich environments.</title>
        <authorList>
            <person name="Muller D."/>
            <person name="Medigue C."/>
            <person name="Koechler S."/>
            <person name="Barbe V."/>
            <person name="Barakat M."/>
            <person name="Talla E."/>
            <person name="Bonnefoy V."/>
            <person name="Krin E."/>
            <person name="Arsene-Ploetze F."/>
            <person name="Carapito C."/>
            <person name="Chandler M."/>
            <person name="Cournoyer B."/>
            <person name="Cruveiller S."/>
            <person name="Dossat C."/>
            <person name="Duval S."/>
            <person name="Heymann M."/>
            <person name="Leize E."/>
            <person name="Lieutaud A."/>
            <person name="Lievremont D."/>
            <person name="Makita Y."/>
            <person name="Mangenot S."/>
            <person name="Nitschke W."/>
            <person name="Ortet P."/>
            <person name="Perdrial N."/>
            <person name="Schoepp B."/>
            <person name="Siguier P."/>
            <person name="Simeonova D.D."/>
            <person name="Rouy Z."/>
            <person name="Segurens B."/>
            <person name="Turlin E."/>
            <person name="Vallenet D."/>
            <person name="van Dorsselaer A."/>
            <person name="Weiss S."/>
            <person name="Weissenbach J."/>
            <person name="Lett M.-C."/>
            <person name="Danchin A."/>
            <person name="Bertin P.N."/>
        </authorList>
    </citation>
    <scope>NUCLEOTIDE SEQUENCE [LARGE SCALE GENOMIC DNA]</scope>
    <source>
        <strain>ULPAs1</strain>
    </source>
</reference>
<protein>
    <recommendedName>
        <fullName evidence="1">Succinyl-diaminopimelate desuccinylase</fullName>
        <shortName evidence="1">SDAP desuccinylase</shortName>
        <ecNumber evidence="1">3.5.1.18</ecNumber>
    </recommendedName>
    <alternativeName>
        <fullName evidence="1">N-succinyl-LL-2,6-diaminoheptanedioate amidohydrolase</fullName>
    </alternativeName>
</protein>
<keyword id="KW-0028">Amino-acid biosynthesis</keyword>
<keyword id="KW-0170">Cobalt</keyword>
<keyword id="KW-0220">Diaminopimelate biosynthesis</keyword>
<keyword id="KW-0378">Hydrolase</keyword>
<keyword id="KW-0457">Lysine biosynthesis</keyword>
<keyword id="KW-0479">Metal-binding</keyword>
<keyword id="KW-1185">Reference proteome</keyword>
<keyword id="KW-0862">Zinc</keyword>
<name>DAPE_HERAR</name>
<proteinExistence type="inferred from homology"/>
<evidence type="ECO:0000255" key="1">
    <source>
        <dbReference type="HAMAP-Rule" id="MF_01690"/>
    </source>
</evidence>
<dbReference type="EC" id="3.5.1.18" evidence="1"/>
<dbReference type="EMBL" id="CU207211">
    <property type="protein sequence ID" value="CAL61494.1"/>
    <property type="molecule type" value="Genomic_DNA"/>
</dbReference>
<dbReference type="SMR" id="A4G4Q7"/>
<dbReference type="STRING" id="204773.HEAR1321"/>
<dbReference type="KEGG" id="har:HEAR1321"/>
<dbReference type="eggNOG" id="COG0624">
    <property type="taxonomic scope" value="Bacteria"/>
</dbReference>
<dbReference type="HOGENOM" id="CLU_021802_4_0_4"/>
<dbReference type="OrthoDB" id="9809784at2"/>
<dbReference type="UniPathway" id="UPA00034">
    <property type="reaction ID" value="UER00021"/>
</dbReference>
<dbReference type="Proteomes" id="UP000006697">
    <property type="component" value="Chromosome"/>
</dbReference>
<dbReference type="GO" id="GO:0008777">
    <property type="term" value="F:acetylornithine deacetylase activity"/>
    <property type="evidence" value="ECO:0007669"/>
    <property type="project" value="TreeGrafter"/>
</dbReference>
<dbReference type="GO" id="GO:0050897">
    <property type="term" value="F:cobalt ion binding"/>
    <property type="evidence" value="ECO:0007669"/>
    <property type="project" value="UniProtKB-UniRule"/>
</dbReference>
<dbReference type="GO" id="GO:0009014">
    <property type="term" value="F:succinyl-diaminopimelate desuccinylase activity"/>
    <property type="evidence" value="ECO:0007669"/>
    <property type="project" value="UniProtKB-UniRule"/>
</dbReference>
<dbReference type="GO" id="GO:0008270">
    <property type="term" value="F:zinc ion binding"/>
    <property type="evidence" value="ECO:0007669"/>
    <property type="project" value="UniProtKB-UniRule"/>
</dbReference>
<dbReference type="GO" id="GO:0019877">
    <property type="term" value="P:diaminopimelate biosynthetic process"/>
    <property type="evidence" value="ECO:0007669"/>
    <property type="project" value="UniProtKB-UniRule"/>
</dbReference>
<dbReference type="GO" id="GO:0006526">
    <property type="term" value="P:L-arginine biosynthetic process"/>
    <property type="evidence" value="ECO:0007669"/>
    <property type="project" value="TreeGrafter"/>
</dbReference>
<dbReference type="GO" id="GO:0009089">
    <property type="term" value="P:lysine biosynthetic process via diaminopimelate"/>
    <property type="evidence" value="ECO:0007669"/>
    <property type="project" value="UniProtKB-UniRule"/>
</dbReference>
<dbReference type="CDD" id="cd03891">
    <property type="entry name" value="M20_DapE_proteobac"/>
    <property type="match status" value="1"/>
</dbReference>
<dbReference type="FunFam" id="3.30.70.360:FF:000011">
    <property type="entry name" value="Succinyl-diaminopimelate desuccinylase"/>
    <property type="match status" value="1"/>
</dbReference>
<dbReference type="FunFam" id="3.40.630.10:FF:000005">
    <property type="entry name" value="Succinyl-diaminopimelate desuccinylase"/>
    <property type="match status" value="1"/>
</dbReference>
<dbReference type="Gene3D" id="3.40.630.10">
    <property type="entry name" value="Zn peptidases"/>
    <property type="match status" value="2"/>
</dbReference>
<dbReference type="HAMAP" id="MF_01690">
    <property type="entry name" value="DapE"/>
    <property type="match status" value="1"/>
</dbReference>
<dbReference type="InterPro" id="IPR036264">
    <property type="entry name" value="Bact_exopeptidase_dim_dom"/>
</dbReference>
<dbReference type="InterPro" id="IPR005941">
    <property type="entry name" value="DapE_proteobac"/>
</dbReference>
<dbReference type="InterPro" id="IPR002933">
    <property type="entry name" value="Peptidase_M20"/>
</dbReference>
<dbReference type="InterPro" id="IPR011650">
    <property type="entry name" value="Peptidase_M20_dimer"/>
</dbReference>
<dbReference type="InterPro" id="IPR050072">
    <property type="entry name" value="Peptidase_M20A"/>
</dbReference>
<dbReference type="NCBIfam" id="TIGR01246">
    <property type="entry name" value="dapE_proteo"/>
    <property type="match status" value="1"/>
</dbReference>
<dbReference type="NCBIfam" id="NF009557">
    <property type="entry name" value="PRK13009.1"/>
    <property type="match status" value="1"/>
</dbReference>
<dbReference type="PANTHER" id="PTHR43808">
    <property type="entry name" value="ACETYLORNITHINE DEACETYLASE"/>
    <property type="match status" value="1"/>
</dbReference>
<dbReference type="PANTHER" id="PTHR43808:SF31">
    <property type="entry name" value="N-ACETYL-L-CITRULLINE DEACETYLASE"/>
    <property type="match status" value="1"/>
</dbReference>
<dbReference type="Pfam" id="PF07687">
    <property type="entry name" value="M20_dimer"/>
    <property type="match status" value="1"/>
</dbReference>
<dbReference type="Pfam" id="PF01546">
    <property type="entry name" value="Peptidase_M20"/>
    <property type="match status" value="1"/>
</dbReference>
<dbReference type="SUPFAM" id="SSF55031">
    <property type="entry name" value="Bacterial exopeptidase dimerisation domain"/>
    <property type="match status" value="1"/>
</dbReference>
<dbReference type="SUPFAM" id="SSF53187">
    <property type="entry name" value="Zn-dependent exopeptidases"/>
    <property type="match status" value="1"/>
</dbReference>
<feature type="chain" id="PRO_0000375592" description="Succinyl-diaminopimelate desuccinylase">
    <location>
        <begin position="1"/>
        <end position="375"/>
    </location>
</feature>
<feature type="active site" evidence="1">
    <location>
        <position position="68"/>
    </location>
</feature>
<feature type="active site" description="Proton acceptor" evidence="1">
    <location>
        <position position="133"/>
    </location>
</feature>
<feature type="binding site" evidence="1">
    <location>
        <position position="66"/>
    </location>
    <ligand>
        <name>Zn(2+)</name>
        <dbReference type="ChEBI" id="CHEBI:29105"/>
        <label>1</label>
    </ligand>
</feature>
<feature type="binding site" evidence="1">
    <location>
        <position position="99"/>
    </location>
    <ligand>
        <name>Zn(2+)</name>
        <dbReference type="ChEBI" id="CHEBI:29105"/>
        <label>1</label>
    </ligand>
</feature>
<feature type="binding site" evidence="1">
    <location>
        <position position="99"/>
    </location>
    <ligand>
        <name>Zn(2+)</name>
        <dbReference type="ChEBI" id="CHEBI:29105"/>
        <label>2</label>
    </ligand>
</feature>
<feature type="binding site" evidence="1">
    <location>
        <position position="134"/>
    </location>
    <ligand>
        <name>Zn(2+)</name>
        <dbReference type="ChEBI" id="CHEBI:29105"/>
        <label>2</label>
    </ligand>
</feature>
<feature type="binding site" evidence="1">
    <location>
        <position position="162"/>
    </location>
    <ligand>
        <name>Zn(2+)</name>
        <dbReference type="ChEBI" id="CHEBI:29105"/>
        <label>1</label>
    </ligand>
</feature>
<feature type="binding site" evidence="1">
    <location>
        <position position="348"/>
    </location>
    <ligand>
        <name>Zn(2+)</name>
        <dbReference type="ChEBI" id="CHEBI:29105"/>
        <label>2</label>
    </ligand>
</feature>
<gene>
    <name evidence="1" type="primary">dapE</name>
    <name type="ordered locus">HEAR1321</name>
</gene>